<name>SYFB_BACHK</name>
<dbReference type="EC" id="6.1.1.20" evidence="1"/>
<dbReference type="EMBL" id="AE017355">
    <property type="protein sequence ID" value="AAT60891.1"/>
    <property type="molecule type" value="Genomic_DNA"/>
</dbReference>
<dbReference type="RefSeq" id="WP_000498183.1">
    <property type="nucleotide sequence ID" value="NC_005957.1"/>
</dbReference>
<dbReference type="RefSeq" id="YP_038608.1">
    <property type="nucleotide sequence ID" value="NC_005957.1"/>
</dbReference>
<dbReference type="SMR" id="Q6HCW8"/>
<dbReference type="GeneID" id="45024432"/>
<dbReference type="KEGG" id="btk:BT9727_4293"/>
<dbReference type="PATRIC" id="fig|281309.8.peg.4576"/>
<dbReference type="HOGENOM" id="CLU_016891_0_0_9"/>
<dbReference type="Proteomes" id="UP000001301">
    <property type="component" value="Chromosome"/>
</dbReference>
<dbReference type="GO" id="GO:0009328">
    <property type="term" value="C:phenylalanine-tRNA ligase complex"/>
    <property type="evidence" value="ECO:0007669"/>
    <property type="project" value="TreeGrafter"/>
</dbReference>
<dbReference type="GO" id="GO:0005524">
    <property type="term" value="F:ATP binding"/>
    <property type="evidence" value="ECO:0007669"/>
    <property type="project" value="UniProtKB-UniRule"/>
</dbReference>
<dbReference type="GO" id="GO:0140096">
    <property type="term" value="F:catalytic activity, acting on a protein"/>
    <property type="evidence" value="ECO:0007669"/>
    <property type="project" value="UniProtKB-ARBA"/>
</dbReference>
<dbReference type="GO" id="GO:0000287">
    <property type="term" value="F:magnesium ion binding"/>
    <property type="evidence" value="ECO:0007669"/>
    <property type="project" value="UniProtKB-UniRule"/>
</dbReference>
<dbReference type="GO" id="GO:0004826">
    <property type="term" value="F:phenylalanine-tRNA ligase activity"/>
    <property type="evidence" value="ECO:0007669"/>
    <property type="project" value="UniProtKB-UniRule"/>
</dbReference>
<dbReference type="GO" id="GO:0016740">
    <property type="term" value="F:transferase activity"/>
    <property type="evidence" value="ECO:0007669"/>
    <property type="project" value="UniProtKB-ARBA"/>
</dbReference>
<dbReference type="GO" id="GO:0000049">
    <property type="term" value="F:tRNA binding"/>
    <property type="evidence" value="ECO:0007669"/>
    <property type="project" value="UniProtKB-KW"/>
</dbReference>
<dbReference type="GO" id="GO:0006432">
    <property type="term" value="P:phenylalanyl-tRNA aminoacylation"/>
    <property type="evidence" value="ECO:0007669"/>
    <property type="project" value="UniProtKB-UniRule"/>
</dbReference>
<dbReference type="CDD" id="cd00769">
    <property type="entry name" value="PheRS_beta_core"/>
    <property type="match status" value="1"/>
</dbReference>
<dbReference type="CDD" id="cd02796">
    <property type="entry name" value="tRNA_bind_bactPheRS"/>
    <property type="match status" value="1"/>
</dbReference>
<dbReference type="FunFam" id="2.40.50.140:FF:000045">
    <property type="entry name" value="Phenylalanine--tRNA ligase beta subunit"/>
    <property type="match status" value="1"/>
</dbReference>
<dbReference type="FunFam" id="3.30.56.10:FF:000002">
    <property type="entry name" value="Phenylalanine--tRNA ligase beta subunit"/>
    <property type="match status" value="1"/>
</dbReference>
<dbReference type="FunFam" id="3.30.70.380:FF:000001">
    <property type="entry name" value="Phenylalanine--tRNA ligase beta subunit"/>
    <property type="match status" value="1"/>
</dbReference>
<dbReference type="FunFam" id="3.30.930.10:FF:000022">
    <property type="entry name" value="Phenylalanine--tRNA ligase beta subunit"/>
    <property type="match status" value="1"/>
</dbReference>
<dbReference type="FunFam" id="3.50.40.10:FF:000001">
    <property type="entry name" value="Phenylalanine--tRNA ligase beta subunit"/>
    <property type="match status" value="1"/>
</dbReference>
<dbReference type="Gene3D" id="3.30.56.10">
    <property type="match status" value="2"/>
</dbReference>
<dbReference type="Gene3D" id="3.30.930.10">
    <property type="entry name" value="Bira Bifunctional Protein, Domain 2"/>
    <property type="match status" value="1"/>
</dbReference>
<dbReference type="Gene3D" id="3.30.70.380">
    <property type="entry name" value="Ferrodoxin-fold anticodon-binding domain"/>
    <property type="match status" value="1"/>
</dbReference>
<dbReference type="Gene3D" id="2.40.50.140">
    <property type="entry name" value="Nucleic acid-binding proteins"/>
    <property type="match status" value="1"/>
</dbReference>
<dbReference type="Gene3D" id="3.50.40.10">
    <property type="entry name" value="Phenylalanyl-trna Synthetase, Chain B, domain 3"/>
    <property type="match status" value="1"/>
</dbReference>
<dbReference type="HAMAP" id="MF_00283">
    <property type="entry name" value="Phe_tRNA_synth_beta1"/>
    <property type="match status" value="1"/>
</dbReference>
<dbReference type="InterPro" id="IPR045864">
    <property type="entry name" value="aa-tRNA-synth_II/BPL/LPL"/>
</dbReference>
<dbReference type="InterPro" id="IPR005146">
    <property type="entry name" value="B3/B4_tRNA-bd"/>
</dbReference>
<dbReference type="InterPro" id="IPR009061">
    <property type="entry name" value="DNA-bd_dom_put_sf"/>
</dbReference>
<dbReference type="InterPro" id="IPR005121">
    <property type="entry name" value="Fdx_antiC-bd"/>
</dbReference>
<dbReference type="InterPro" id="IPR036690">
    <property type="entry name" value="Fdx_antiC-bd_sf"/>
</dbReference>
<dbReference type="InterPro" id="IPR012340">
    <property type="entry name" value="NA-bd_OB-fold"/>
</dbReference>
<dbReference type="InterPro" id="IPR045060">
    <property type="entry name" value="Phe-tRNA-ligase_IIc_bsu"/>
</dbReference>
<dbReference type="InterPro" id="IPR004532">
    <property type="entry name" value="Phe-tRNA-ligase_IIc_bsu_bact"/>
</dbReference>
<dbReference type="InterPro" id="IPR020825">
    <property type="entry name" value="Phe-tRNA_synthase-like_B3/B4"/>
</dbReference>
<dbReference type="InterPro" id="IPR041616">
    <property type="entry name" value="PheRS_beta_core"/>
</dbReference>
<dbReference type="InterPro" id="IPR002547">
    <property type="entry name" value="tRNA-bd_dom"/>
</dbReference>
<dbReference type="InterPro" id="IPR033714">
    <property type="entry name" value="tRNA_bind_bactPheRS"/>
</dbReference>
<dbReference type="InterPro" id="IPR005147">
    <property type="entry name" value="tRNA_synthase_B5-dom"/>
</dbReference>
<dbReference type="NCBIfam" id="TIGR00472">
    <property type="entry name" value="pheT_bact"/>
    <property type="match status" value="1"/>
</dbReference>
<dbReference type="NCBIfam" id="NF045760">
    <property type="entry name" value="YtpR"/>
    <property type="match status" value="1"/>
</dbReference>
<dbReference type="PANTHER" id="PTHR10947:SF0">
    <property type="entry name" value="PHENYLALANINE--TRNA LIGASE BETA SUBUNIT"/>
    <property type="match status" value="1"/>
</dbReference>
<dbReference type="PANTHER" id="PTHR10947">
    <property type="entry name" value="PHENYLALANYL-TRNA SYNTHETASE BETA CHAIN AND LEUCINE-RICH REPEAT-CONTAINING PROTEIN 47"/>
    <property type="match status" value="1"/>
</dbReference>
<dbReference type="Pfam" id="PF03483">
    <property type="entry name" value="B3_4"/>
    <property type="match status" value="1"/>
</dbReference>
<dbReference type="Pfam" id="PF03484">
    <property type="entry name" value="B5"/>
    <property type="match status" value="1"/>
</dbReference>
<dbReference type="Pfam" id="PF03147">
    <property type="entry name" value="FDX-ACB"/>
    <property type="match status" value="1"/>
</dbReference>
<dbReference type="Pfam" id="PF01588">
    <property type="entry name" value="tRNA_bind"/>
    <property type="match status" value="1"/>
</dbReference>
<dbReference type="Pfam" id="PF17759">
    <property type="entry name" value="tRNA_synthFbeta"/>
    <property type="match status" value="1"/>
</dbReference>
<dbReference type="SMART" id="SM00873">
    <property type="entry name" value="B3_4"/>
    <property type="match status" value="1"/>
</dbReference>
<dbReference type="SMART" id="SM00874">
    <property type="entry name" value="B5"/>
    <property type="match status" value="1"/>
</dbReference>
<dbReference type="SMART" id="SM00896">
    <property type="entry name" value="FDX-ACB"/>
    <property type="match status" value="1"/>
</dbReference>
<dbReference type="SUPFAM" id="SSF54991">
    <property type="entry name" value="Anticodon-binding domain of PheRS"/>
    <property type="match status" value="1"/>
</dbReference>
<dbReference type="SUPFAM" id="SSF55681">
    <property type="entry name" value="Class II aaRS and biotin synthetases"/>
    <property type="match status" value="1"/>
</dbReference>
<dbReference type="SUPFAM" id="SSF50249">
    <property type="entry name" value="Nucleic acid-binding proteins"/>
    <property type="match status" value="1"/>
</dbReference>
<dbReference type="SUPFAM" id="SSF56037">
    <property type="entry name" value="PheT/TilS domain"/>
    <property type="match status" value="1"/>
</dbReference>
<dbReference type="SUPFAM" id="SSF46955">
    <property type="entry name" value="Putative DNA-binding domain"/>
    <property type="match status" value="1"/>
</dbReference>
<dbReference type="PROSITE" id="PS51483">
    <property type="entry name" value="B5"/>
    <property type="match status" value="1"/>
</dbReference>
<dbReference type="PROSITE" id="PS51447">
    <property type="entry name" value="FDX_ACB"/>
    <property type="match status" value="1"/>
</dbReference>
<dbReference type="PROSITE" id="PS50886">
    <property type="entry name" value="TRBD"/>
    <property type="match status" value="1"/>
</dbReference>
<keyword id="KW-0030">Aminoacyl-tRNA synthetase</keyword>
<keyword id="KW-0067">ATP-binding</keyword>
<keyword id="KW-0963">Cytoplasm</keyword>
<keyword id="KW-0436">Ligase</keyword>
<keyword id="KW-0460">Magnesium</keyword>
<keyword id="KW-0479">Metal-binding</keyword>
<keyword id="KW-0547">Nucleotide-binding</keyword>
<keyword id="KW-0648">Protein biosynthesis</keyword>
<keyword id="KW-0694">RNA-binding</keyword>
<keyword id="KW-0820">tRNA-binding</keyword>
<feature type="chain" id="PRO_0000126842" description="Phenylalanine--tRNA ligase beta subunit">
    <location>
        <begin position="1"/>
        <end position="806"/>
    </location>
</feature>
<feature type="domain" description="tRNA-binding" evidence="1">
    <location>
        <begin position="40"/>
        <end position="155"/>
    </location>
</feature>
<feature type="domain" description="B5" evidence="1">
    <location>
        <begin position="409"/>
        <end position="484"/>
    </location>
</feature>
<feature type="domain" description="FDX-ACB" evidence="1">
    <location>
        <begin position="712"/>
        <end position="805"/>
    </location>
</feature>
<feature type="binding site" evidence="1">
    <location>
        <position position="462"/>
    </location>
    <ligand>
        <name>Mg(2+)</name>
        <dbReference type="ChEBI" id="CHEBI:18420"/>
        <note>shared with alpha subunit</note>
    </ligand>
</feature>
<feature type="binding site" evidence="1">
    <location>
        <position position="468"/>
    </location>
    <ligand>
        <name>Mg(2+)</name>
        <dbReference type="ChEBI" id="CHEBI:18420"/>
        <note>shared with alpha subunit</note>
    </ligand>
</feature>
<feature type="binding site" evidence="1">
    <location>
        <position position="471"/>
    </location>
    <ligand>
        <name>Mg(2+)</name>
        <dbReference type="ChEBI" id="CHEBI:18420"/>
        <note>shared with alpha subunit</note>
    </ligand>
</feature>
<feature type="binding site" evidence="1">
    <location>
        <position position="472"/>
    </location>
    <ligand>
        <name>Mg(2+)</name>
        <dbReference type="ChEBI" id="CHEBI:18420"/>
        <note>shared with alpha subunit</note>
    </ligand>
</feature>
<gene>
    <name evidence="1" type="primary">pheT</name>
    <name type="ordered locus">BT9727_4293</name>
</gene>
<organism>
    <name type="scientific">Bacillus thuringiensis subsp. konkukian (strain 97-27)</name>
    <dbReference type="NCBI Taxonomy" id="281309"/>
    <lineage>
        <taxon>Bacteria</taxon>
        <taxon>Bacillati</taxon>
        <taxon>Bacillota</taxon>
        <taxon>Bacilli</taxon>
        <taxon>Bacillales</taxon>
        <taxon>Bacillaceae</taxon>
        <taxon>Bacillus</taxon>
        <taxon>Bacillus cereus group</taxon>
    </lineage>
</organism>
<proteinExistence type="inferred from homology"/>
<accession>Q6HCW8</accession>
<sequence>MFVSYRWLQEYVDIKDVTAQELADKITKSGIEVEGVEVLNKGVKGVVVGHVLECEKHPEADKLSKCLIDIGEEEPVQIICGAANIAKGLKVPVAKVGAVLPGNFKIKKAKLRGEASHGMVCALQELGIDGKLVSKEYADGIFIFPSDAEVGADALEILNLHDEVLELGLTPNRADCLNMLGVAYEVAAIYGREVKLPAIDLQETAEKTSDYISVSVEAKEENPLYIAKMVKNVKIGPSPMWMQTRLMAAGIRPISNVVDITNYILMEYGQPLHAFDYDKLGSKEIVVRLAKEGEKIETLDDQERTLQSHHLVITNGTKALAVAGVMGGADSEVTNETVNVLIESAYFAGQTVRRTSKDLGLRSESSARFEKGIDPTRTFEAIQHAAALMAKYAGGEALEGVVEADNLQVQERTVSVTAEKVNRVLGTNISASEMGTMFTNLKFPFTEVEGTFHVNVPARRPDITISEDLVEEVGRLYGYDHIPVTLPSGTMTRGKLTAAQTKRRKVRRFLEGAGLYEAITYSLTSADKAKQYMVEPNEKAPVNLALPMSEERSQLRLSLVPQLLEAVSYNVARKNDSVALYEVGSIFLPTEAGELPKEEQHLAGVMTGLALHHAWQGEKKVVDFFVVKGVLEGLFDVLGVSNQITYAPAKREGMHPGRTADIVLDGEVIGFIGQLHPEAEKQLDVKNTFVFELSLVKVFGTDAEETYYSAIPRFPSMTRDMAVVVTKETKAGEMKQVIAEAGGELLKDVTLFDLYEGEKMEEGKKSLAFSMNYFDPERTLTDEEVTEAHNRVLTAVEEKFGAELRK</sequence>
<comment type="catalytic activity">
    <reaction evidence="1">
        <text>tRNA(Phe) + L-phenylalanine + ATP = L-phenylalanyl-tRNA(Phe) + AMP + diphosphate + H(+)</text>
        <dbReference type="Rhea" id="RHEA:19413"/>
        <dbReference type="Rhea" id="RHEA-COMP:9668"/>
        <dbReference type="Rhea" id="RHEA-COMP:9699"/>
        <dbReference type="ChEBI" id="CHEBI:15378"/>
        <dbReference type="ChEBI" id="CHEBI:30616"/>
        <dbReference type="ChEBI" id="CHEBI:33019"/>
        <dbReference type="ChEBI" id="CHEBI:58095"/>
        <dbReference type="ChEBI" id="CHEBI:78442"/>
        <dbReference type="ChEBI" id="CHEBI:78531"/>
        <dbReference type="ChEBI" id="CHEBI:456215"/>
        <dbReference type="EC" id="6.1.1.20"/>
    </reaction>
</comment>
<comment type="cofactor">
    <cofactor evidence="1">
        <name>Mg(2+)</name>
        <dbReference type="ChEBI" id="CHEBI:18420"/>
    </cofactor>
    <text evidence="1">Binds 2 magnesium ions per tetramer.</text>
</comment>
<comment type="subunit">
    <text evidence="1">Tetramer of two alpha and two beta subunits.</text>
</comment>
<comment type="subcellular location">
    <subcellularLocation>
        <location evidence="1">Cytoplasm</location>
    </subcellularLocation>
</comment>
<comment type="similarity">
    <text evidence="1">Belongs to the phenylalanyl-tRNA synthetase beta subunit family. Type 1 subfamily.</text>
</comment>
<evidence type="ECO:0000255" key="1">
    <source>
        <dbReference type="HAMAP-Rule" id="MF_00283"/>
    </source>
</evidence>
<reference key="1">
    <citation type="journal article" date="2006" name="J. Bacteriol.">
        <title>Pathogenomic sequence analysis of Bacillus cereus and Bacillus thuringiensis isolates closely related to Bacillus anthracis.</title>
        <authorList>
            <person name="Han C.S."/>
            <person name="Xie G."/>
            <person name="Challacombe J.F."/>
            <person name="Altherr M.R."/>
            <person name="Bhotika S.S."/>
            <person name="Bruce D."/>
            <person name="Campbell C.S."/>
            <person name="Campbell M.L."/>
            <person name="Chen J."/>
            <person name="Chertkov O."/>
            <person name="Cleland C."/>
            <person name="Dimitrijevic M."/>
            <person name="Doggett N.A."/>
            <person name="Fawcett J.J."/>
            <person name="Glavina T."/>
            <person name="Goodwin L.A."/>
            <person name="Hill K.K."/>
            <person name="Hitchcock P."/>
            <person name="Jackson P.J."/>
            <person name="Keim P."/>
            <person name="Kewalramani A.R."/>
            <person name="Longmire J."/>
            <person name="Lucas S."/>
            <person name="Malfatti S."/>
            <person name="McMurry K."/>
            <person name="Meincke L.J."/>
            <person name="Misra M."/>
            <person name="Moseman B.L."/>
            <person name="Mundt M."/>
            <person name="Munk A.C."/>
            <person name="Okinaka R.T."/>
            <person name="Parson-Quintana B."/>
            <person name="Reilly L.P."/>
            <person name="Richardson P."/>
            <person name="Robinson D.L."/>
            <person name="Rubin E."/>
            <person name="Saunders E."/>
            <person name="Tapia R."/>
            <person name="Tesmer J.G."/>
            <person name="Thayer N."/>
            <person name="Thompson L.S."/>
            <person name="Tice H."/>
            <person name="Ticknor L.O."/>
            <person name="Wills P.L."/>
            <person name="Brettin T.S."/>
            <person name="Gilna P."/>
        </authorList>
    </citation>
    <scope>NUCLEOTIDE SEQUENCE [LARGE SCALE GENOMIC DNA]</scope>
    <source>
        <strain>97-27</strain>
    </source>
</reference>
<protein>
    <recommendedName>
        <fullName evidence="1">Phenylalanine--tRNA ligase beta subunit</fullName>
        <ecNumber evidence="1">6.1.1.20</ecNumber>
    </recommendedName>
    <alternativeName>
        <fullName evidence="1">Phenylalanyl-tRNA synthetase beta subunit</fullName>
        <shortName evidence="1">PheRS</shortName>
    </alternativeName>
</protein>